<reference key="1">
    <citation type="submission" date="2007-03" db="EMBL/GenBank/DDBJ databases">
        <title>Complete sequence of Prosthecochloris vibrioformis DSM 265.</title>
        <authorList>
            <consortium name="US DOE Joint Genome Institute"/>
            <person name="Copeland A."/>
            <person name="Lucas S."/>
            <person name="Lapidus A."/>
            <person name="Barry K."/>
            <person name="Detter J.C."/>
            <person name="Glavina del Rio T."/>
            <person name="Hammon N."/>
            <person name="Israni S."/>
            <person name="Pitluck S."/>
            <person name="Schmutz J."/>
            <person name="Larimer F."/>
            <person name="Land M."/>
            <person name="Hauser L."/>
            <person name="Mikhailova N."/>
            <person name="Li T."/>
            <person name="Overmann J."/>
            <person name="Schuster S.C."/>
            <person name="Bryant D.A."/>
            <person name="Richardson P."/>
        </authorList>
    </citation>
    <scope>NUCLEOTIDE SEQUENCE [LARGE SCALE GENOMIC DNA]</scope>
    <source>
        <strain>DSM 265 / 1930</strain>
    </source>
</reference>
<evidence type="ECO:0000255" key="1">
    <source>
        <dbReference type="HAMAP-Rule" id="MF_00071"/>
    </source>
</evidence>
<dbReference type="EC" id="3.6.5.n1" evidence="1"/>
<dbReference type="EMBL" id="CP000607">
    <property type="protein sequence ID" value="ABP37294.1"/>
    <property type="molecule type" value="Genomic_DNA"/>
</dbReference>
<dbReference type="SMR" id="A4SFN5"/>
<dbReference type="STRING" id="290318.Cvib_1282"/>
<dbReference type="KEGG" id="pvi:Cvib_1282"/>
<dbReference type="eggNOG" id="COG0481">
    <property type="taxonomic scope" value="Bacteria"/>
</dbReference>
<dbReference type="HOGENOM" id="CLU_009995_3_3_10"/>
<dbReference type="OrthoDB" id="9801591at2"/>
<dbReference type="GO" id="GO:0005886">
    <property type="term" value="C:plasma membrane"/>
    <property type="evidence" value="ECO:0007669"/>
    <property type="project" value="UniProtKB-SubCell"/>
</dbReference>
<dbReference type="GO" id="GO:0005525">
    <property type="term" value="F:GTP binding"/>
    <property type="evidence" value="ECO:0007669"/>
    <property type="project" value="UniProtKB-UniRule"/>
</dbReference>
<dbReference type="GO" id="GO:0003924">
    <property type="term" value="F:GTPase activity"/>
    <property type="evidence" value="ECO:0007669"/>
    <property type="project" value="UniProtKB-UniRule"/>
</dbReference>
<dbReference type="GO" id="GO:0043022">
    <property type="term" value="F:ribosome binding"/>
    <property type="evidence" value="ECO:0007669"/>
    <property type="project" value="UniProtKB-UniRule"/>
</dbReference>
<dbReference type="GO" id="GO:0003746">
    <property type="term" value="F:translation elongation factor activity"/>
    <property type="evidence" value="ECO:0007669"/>
    <property type="project" value="UniProtKB-UniRule"/>
</dbReference>
<dbReference type="GO" id="GO:0045727">
    <property type="term" value="P:positive regulation of translation"/>
    <property type="evidence" value="ECO:0007669"/>
    <property type="project" value="UniProtKB-UniRule"/>
</dbReference>
<dbReference type="CDD" id="cd03699">
    <property type="entry name" value="EF4_II"/>
    <property type="match status" value="1"/>
</dbReference>
<dbReference type="CDD" id="cd16260">
    <property type="entry name" value="EF4_III"/>
    <property type="match status" value="1"/>
</dbReference>
<dbReference type="CDD" id="cd01890">
    <property type="entry name" value="LepA"/>
    <property type="match status" value="1"/>
</dbReference>
<dbReference type="CDD" id="cd03709">
    <property type="entry name" value="lepA_C"/>
    <property type="match status" value="1"/>
</dbReference>
<dbReference type="FunFam" id="3.40.50.300:FF:000078">
    <property type="entry name" value="Elongation factor 4"/>
    <property type="match status" value="1"/>
</dbReference>
<dbReference type="FunFam" id="2.40.30.10:FF:000015">
    <property type="entry name" value="Translation factor GUF1, mitochondrial"/>
    <property type="match status" value="1"/>
</dbReference>
<dbReference type="FunFam" id="3.30.70.240:FF:000007">
    <property type="entry name" value="Translation factor GUF1, mitochondrial"/>
    <property type="match status" value="1"/>
</dbReference>
<dbReference type="FunFam" id="3.30.70.2570:FF:000001">
    <property type="entry name" value="Translation factor GUF1, mitochondrial"/>
    <property type="match status" value="1"/>
</dbReference>
<dbReference type="FunFam" id="3.30.70.870:FF:000004">
    <property type="entry name" value="Translation factor GUF1, mitochondrial"/>
    <property type="match status" value="1"/>
</dbReference>
<dbReference type="Gene3D" id="3.30.70.240">
    <property type="match status" value="1"/>
</dbReference>
<dbReference type="Gene3D" id="3.30.70.2570">
    <property type="entry name" value="Elongation factor 4, C-terminal domain"/>
    <property type="match status" value="1"/>
</dbReference>
<dbReference type="Gene3D" id="3.30.70.870">
    <property type="entry name" value="Elongation Factor G (Translational Gtpase), domain 3"/>
    <property type="match status" value="1"/>
</dbReference>
<dbReference type="Gene3D" id="3.40.50.300">
    <property type="entry name" value="P-loop containing nucleotide triphosphate hydrolases"/>
    <property type="match status" value="1"/>
</dbReference>
<dbReference type="Gene3D" id="2.40.30.10">
    <property type="entry name" value="Translation factors"/>
    <property type="match status" value="1"/>
</dbReference>
<dbReference type="HAMAP" id="MF_00071">
    <property type="entry name" value="LepA"/>
    <property type="match status" value="1"/>
</dbReference>
<dbReference type="InterPro" id="IPR006297">
    <property type="entry name" value="EF-4"/>
</dbReference>
<dbReference type="InterPro" id="IPR035647">
    <property type="entry name" value="EFG_III/V"/>
</dbReference>
<dbReference type="InterPro" id="IPR000640">
    <property type="entry name" value="EFG_V-like"/>
</dbReference>
<dbReference type="InterPro" id="IPR004161">
    <property type="entry name" value="EFTu-like_2"/>
</dbReference>
<dbReference type="InterPro" id="IPR038363">
    <property type="entry name" value="LepA_C_sf"/>
</dbReference>
<dbReference type="InterPro" id="IPR013842">
    <property type="entry name" value="LepA_CTD"/>
</dbReference>
<dbReference type="InterPro" id="IPR035654">
    <property type="entry name" value="LepA_IV"/>
</dbReference>
<dbReference type="InterPro" id="IPR027417">
    <property type="entry name" value="P-loop_NTPase"/>
</dbReference>
<dbReference type="InterPro" id="IPR005225">
    <property type="entry name" value="Small_GTP-bd"/>
</dbReference>
<dbReference type="InterPro" id="IPR000795">
    <property type="entry name" value="T_Tr_GTP-bd_dom"/>
</dbReference>
<dbReference type="InterPro" id="IPR009000">
    <property type="entry name" value="Transl_B-barrel_sf"/>
</dbReference>
<dbReference type="NCBIfam" id="TIGR01393">
    <property type="entry name" value="lepA"/>
    <property type="match status" value="1"/>
</dbReference>
<dbReference type="NCBIfam" id="TIGR00231">
    <property type="entry name" value="small_GTP"/>
    <property type="match status" value="1"/>
</dbReference>
<dbReference type="PANTHER" id="PTHR43512:SF4">
    <property type="entry name" value="TRANSLATION FACTOR GUF1 HOMOLOG, CHLOROPLASTIC"/>
    <property type="match status" value="1"/>
</dbReference>
<dbReference type="PANTHER" id="PTHR43512">
    <property type="entry name" value="TRANSLATION FACTOR GUF1-RELATED"/>
    <property type="match status" value="1"/>
</dbReference>
<dbReference type="Pfam" id="PF00679">
    <property type="entry name" value="EFG_C"/>
    <property type="match status" value="1"/>
</dbReference>
<dbReference type="Pfam" id="PF00009">
    <property type="entry name" value="GTP_EFTU"/>
    <property type="match status" value="1"/>
</dbReference>
<dbReference type="Pfam" id="PF03144">
    <property type="entry name" value="GTP_EFTU_D2"/>
    <property type="match status" value="1"/>
</dbReference>
<dbReference type="Pfam" id="PF06421">
    <property type="entry name" value="LepA_C"/>
    <property type="match status" value="1"/>
</dbReference>
<dbReference type="PRINTS" id="PR00315">
    <property type="entry name" value="ELONGATNFCT"/>
</dbReference>
<dbReference type="SUPFAM" id="SSF54980">
    <property type="entry name" value="EF-G C-terminal domain-like"/>
    <property type="match status" value="2"/>
</dbReference>
<dbReference type="SUPFAM" id="SSF52540">
    <property type="entry name" value="P-loop containing nucleoside triphosphate hydrolases"/>
    <property type="match status" value="1"/>
</dbReference>
<dbReference type="SUPFAM" id="SSF50447">
    <property type="entry name" value="Translation proteins"/>
    <property type="match status" value="1"/>
</dbReference>
<dbReference type="PROSITE" id="PS51722">
    <property type="entry name" value="G_TR_2"/>
    <property type="match status" value="1"/>
</dbReference>
<name>LEPA_CHLPM</name>
<proteinExistence type="inferred from homology"/>
<gene>
    <name evidence="1" type="primary">lepA</name>
    <name type="ordered locus">Cvib_1282</name>
</gene>
<keyword id="KW-0997">Cell inner membrane</keyword>
<keyword id="KW-1003">Cell membrane</keyword>
<keyword id="KW-0342">GTP-binding</keyword>
<keyword id="KW-0378">Hydrolase</keyword>
<keyword id="KW-0472">Membrane</keyword>
<keyword id="KW-0547">Nucleotide-binding</keyword>
<keyword id="KW-0648">Protein biosynthesis</keyword>
<sequence length="605" mass="67633">MAPSSPEVSRIRNFCIIAHIDHGKSTLADRLLEMTHTLDRTQMDSAQVLDDMDLERERGITIKSHAVQMKYCSVAGDDYTLNLIDTPGHVDFSYEVSRSLAACEGALLVVDATQGVEAQTIANLYLAIEAGLEIIPVINKIDLPSSDVEGVASQIIDLIGIEREEILQVSAKAGLGVPELMEAIIARVPSPADNGHLPLRALIFDSVFDAYRGAVVYLRIVDGVLRKGDRVRFFANNKVFLADEIGTMSMKRQPKQVLEAGDVGYLICSIKDVKDAKVGDTVTHADAPADKRLAGYKDVKPMVFSGLYPVNSNEFEDLRESLEKLSLNDASLVYTPETSVALGFGFRCGFLGLLHMEIIQERLEREYNMNIITTVPNVEYRVLMTNGETVIVDNPSKMPDTARITNVEEPYVSMQIITLADYIGNIMKLGMERRGEYRNTDYLDTKRVCMHFEFPLSEIVFDFHDRLKSISKGYASMDYEYIGYRESELVKLDVLLNGEPVDALSIIVHRSKAYDWGRKLCGKLKGIIPKQMYEVAIQAAIGSRIISRETISAMRKNVLAKCYGGDISRKRKLIEKQKEGKKRMKQVGRVEVPQEAFLAILNIDE</sequence>
<accession>A4SFN5</accession>
<protein>
    <recommendedName>
        <fullName evidence="1">Elongation factor 4</fullName>
        <shortName evidence="1">EF-4</shortName>
        <ecNumber evidence="1">3.6.5.n1</ecNumber>
    </recommendedName>
    <alternativeName>
        <fullName evidence="1">Ribosomal back-translocase LepA</fullName>
    </alternativeName>
</protein>
<comment type="function">
    <text evidence="1">Required for accurate and efficient protein synthesis under certain stress conditions. May act as a fidelity factor of the translation reaction, by catalyzing a one-codon backward translocation of tRNAs on improperly translocated ribosomes. Back-translocation proceeds from a post-translocation (POST) complex to a pre-translocation (PRE) complex, thus giving elongation factor G a second chance to translocate the tRNAs correctly. Binds to ribosomes in a GTP-dependent manner.</text>
</comment>
<comment type="catalytic activity">
    <reaction evidence="1">
        <text>GTP + H2O = GDP + phosphate + H(+)</text>
        <dbReference type="Rhea" id="RHEA:19669"/>
        <dbReference type="ChEBI" id="CHEBI:15377"/>
        <dbReference type="ChEBI" id="CHEBI:15378"/>
        <dbReference type="ChEBI" id="CHEBI:37565"/>
        <dbReference type="ChEBI" id="CHEBI:43474"/>
        <dbReference type="ChEBI" id="CHEBI:58189"/>
        <dbReference type="EC" id="3.6.5.n1"/>
    </reaction>
</comment>
<comment type="subcellular location">
    <subcellularLocation>
        <location evidence="1">Cell inner membrane</location>
        <topology evidence="1">Peripheral membrane protein</topology>
        <orientation evidence="1">Cytoplasmic side</orientation>
    </subcellularLocation>
</comment>
<comment type="similarity">
    <text evidence="1">Belongs to the TRAFAC class translation factor GTPase superfamily. Classic translation factor GTPase family. LepA subfamily.</text>
</comment>
<feature type="chain" id="PRO_1000075143" description="Elongation factor 4">
    <location>
        <begin position="1"/>
        <end position="605"/>
    </location>
</feature>
<feature type="domain" description="tr-type G">
    <location>
        <begin position="9"/>
        <end position="192"/>
    </location>
</feature>
<feature type="binding site" evidence="1">
    <location>
        <begin position="21"/>
        <end position="26"/>
    </location>
    <ligand>
        <name>GTP</name>
        <dbReference type="ChEBI" id="CHEBI:37565"/>
    </ligand>
</feature>
<feature type="binding site" evidence="1">
    <location>
        <begin position="139"/>
        <end position="142"/>
    </location>
    <ligand>
        <name>GTP</name>
        <dbReference type="ChEBI" id="CHEBI:37565"/>
    </ligand>
</feature>
<organism>
    <name type="scientific">Chlorobium phaeovibrioides (strain DSM 265 / 1930)</name>
    <name type="common">Prosthecochloris vibrioformis (strain DSM 265)</name>
    <dbReference type="NCBI Taxonomy" id="290318"/>
    <lineage>
        <taxon>Bacteria</taxon>
        <taxon>Pseudomonadati</taxon>
        <taxon>Chlorobiota</taxon>
        <taxon>Chlorobiia</taxon>
        <taxon>Chlorobiales</taxon>
        <taxon>Chlorobiaceae</taxon>
        <taxon>Chlorobium/Pelodictyon group</taxon>
        <taxon>Chlorobium</taxon>
    </lineage>
</organism>